<accession>P68107</accession>
<accession>A5D7G8</accession>
<accession>Q13664</accession>
<accession>Q16645</accession>
<accession>Q9BQ40</accession>
<organism>
    <name type="scientific">Bos taurus</name>
    <name type="common">Bovine</name>
    <dbReference type="NCBI Taxonomy" id="9913"/>
    <lineage>
        <taxon>Eukaryota</taxon>
        <taxon>Metazoa</taxon>
        <taxon>Chordata</taxon>
        <taxon>Craniata</taxon>
        <taxon>Vertebrata</taxon>
        <taxon>Euteleostomi</taxon>
        <taxon>Mammalia</taxon>
        <taxon>Eutheria</taxon>
        <taxon>Laurasiatheria</taxon>
        <taxon>Artiodactyla</taxon>
        <taxon>Ruminantia</taxon>
        <taxon>Pecora</taxon>
        <taxon>Bovidae</taxon>
        <taxon>Bovinae</taxon>
        <taxon>Bos</taxon>
    </lineage>
</organism>
<gene>
    <name type="primary">FKBP1B</name>
    <name type="synonym">FKBP12.6</name>
</gene>
<comment type="function">
    <text evidence="1 3">Has the potential to contribute to the immunosuppressive and toxic effects of FK506 and rapamycin. PPIases accelerate the folding of proteins. It catalyzes the cis-trans isomerization of proline imidic peptide bonds in oligopeptides (By similarity).</text>
</comment>
<comment type="catalytic activity">
    <reaction>
        <text>[protein]-peptidylproline (omega=180) = [protein]-peptidylproline (omega=0)</text>
        <dbReference type="Rhea" id="RHEA:16237"/>
        <dbReference type="Rhea" id="RHEA-COMP:10747"/>
        <dbReference type="Rhea" id="RHEA-COMP:10748"/>
        <dbReference type="ChEBI" id="CHEBI:83833"/>
        <dbReference type="ChEBI" id="CHEBI:83834"/>
        <dbReference type="EC" id="5.2.1.8"/>
    </reaction>
</comment>
<comment type="activity regulation">
    <text>Inhibited by both FK506 and rapamycin.</text>
</comment>
<comment type="subunit">
    <text evidence="1">Identified in a complex composed of RYR2, FKBP1B, PKA catalytic subunit, PRKAR2A, AKAP6, and the protein phosphatases PP2A and PP1. Interacts directly with RYR2 (By similarity).</text>
</comment>
<comment type="subcellular location">
    <subcellularLocation>
        <location evidence="3">Cytoplasm</location>
    </subcellularLocation>
    <subcellularLocation>
        <location evidence="1">Sarcoplasmic reticulum</location>
    </subcellularLocation>
</comment>
<comment type="mass spectrometry"/>
<comment type="similarity">
    <text evidence="4">Belongs to the FKBP-type PPIase family. FKBP1 subfamily.</text>
</comment>
<keyword id="KW-0963">Cytoplasm</keyword>
<keyword id="KW-0903">Direct protein sequencing</keyword>
<keyword id="KW-0413">Isomerase</keyword>
<keyword id="KW-1185">Reference proteome</keyword>
<keyword id="KW-0697">Rotamase</keyword>
<keyword id="KW-0703">Sarcoplasmic reticulum</keyword>
<evidence type="ECO:0000250" key="1"/>
<evidence type="ECO:0000255" key="2">
    <source>
        <dbReference type="PROSITE-ProRule" id="PRU00277"/>
    </source>
</evidence>
<evidence type="ECO:0000269" key="3">
    <source>
    </source>
</evidence>
<evidence type="ECO:0000305" key="4"/>
<name>FKB1B_BOVIN</name>
<reference key="1">
    <citation type="submission" date="2007-04" db="EMBL/GenBank/DDBJ databases">
        <authorList>
            <consortium name="NIH - Mammalian Gene Collection (MGC) project"/>
        </authorList>
    </citation>
    <scope>NUCLEOTIDE SEQUENCE [LARGE SCALE MRNA]</scope>
    <source>
        <strain>Hereford</strain>
        <tissue>Uterus</tissue>
    </source>
</reference>
<reference key="2">
    <citation type="journal article" date="1994" name="J. Biol. Chem.">
        <title>Inhibition of calcineurin by a novel FK-506-binding protein.</title>
        <authorList>
            <person name="Sewell T.J."/>
            <person name="Lam E."/>
            <person name="Martin M.M."/>
            <person name="Leszyk J."/>
            <person name="Weidner J."/>
            <person name="Calaycay J."/>
            <person name="Griffin P."/>
            <person name="Williams H."/>
            <person name="Hung S."/>
            <person name="Cryan J."/>
            <person name="Sigal N.H."/>
            <person name="Wiederrecht G.J."/>
        </authorList>
    </citation>
    <scope>PROTEIN SEQUENCE OF 2-108</scope>
    <scope>FUNCTION</scope>
    <scope>SUBCELLULAR LOCATION</scope>
    <scope>MASS SPECTROMETRY</scope>
    <source>
        <tissue>Brain</tissue>
    </source>
</reference>
<protein>
    <recommendedName>
        <fullName>Peptidyl-prolyl cis-trans isomerase FKBP1B</fullName>
        <shortName>PPIase FKBP1B</shortName>
        <ecNumber>5.2.1.8</ecNumber>
    </recommendedName>
    <alternativeName>
        <fullName>12.6 kDa FK506-binding protein</fullName>
        <shortName>12.6 kDa FKBP</shortName>
        <shortName>FKBP-12.6</shortName>
    </alternativeName>
    <alternativeName>
        <fullName>FK506-binding protein 1B</fullName>
        <shortName>FKBP-1B</shortName>
    </alternativeName>
    <alternativeName>
        <fullName>Immunophilin FKBP12.6</fullName>
    </alternativeName>
    <alternativeName>
        <fullName>Rotamase</fullName>
    </alternativeName>
</protein>
<proteinExistence type="evidence at protein level"/>
<sequence>MGVEIETISPGDGRTFPKKGQTCVVHYTGMLQNGKKFDSSRDRNKPFKFRIGKQEVIKGFEEGAAQMSLGQRAKLTCTPDVAYGATGHPGVIPPNATLIFDVELLNLE</sequence>
<dbReference type="EC" id="5.2.1.8"/>
<dbReference type="EMBL" id="BC140549">
    <property type="protein sequence ID" value="AAI40550.1"/>
    <property type="molecule type" value="mRNA"/>
</dbReference>
<dbReference type="PIR" id="A53924">
    <property type="entry name" value="A53924"/>
</dbReference>
<dbReference type="RefSeq" id="NP_001091627.1">
    <property type="nucleotide sequence ID" value="NM_001098158.1"/>
</dbReference>
<dbReference type="BMRB" id="P68107"/>
<dbReference type="SMR" id="P68107"/>
<dbReference type="FunCoup" id="P68107">
    <property type="interactions" value="1654"/>
</dbReference>
<dbReference type="STRING" id="9913.ENSBTAP00000061969"/>
<dbReference type="PaxDb" id="9913-ENSBTAP00000004419"/>
<dbReference type="Ensembl" id="ENSBTAT00000004419.4">
    <property type="protein sequence ID" value="ENSBTAP00000004419.2"/>
    <property type="gene ID" value="ENSBTAG00000003409.4"/>
</dbReference>
<dbReference type="GeneID" id="785179"/>
<dbReference type="KEGG" id="bta:785179"/>
<dbReference type="CTD" id="2281"/>
<dbReference type="VEuPathDB" id="HostDB:ENSBTAG00000003409"/>
<dbReference type="VGNC" id="VGNC:29021">
    <property type="gene designation" value="FKBP1B"/>
</dbReference>
<dbReference type="eggNOG" id="KOG0544">
    <property type="taxonomic scope" value="Eukaryota"/>
</dbReference>
<dbReference type="GeneTree" id="ENSGT00940000164901"/>
<dbReference type="HOGENOM" id="CLU_013615_12_1_1"/>
<dbReference type="InParanoid" id="P68107"/>
<dbReference type="OMA" id="EQFDASW"/>
<dbReference type="OrthoDB" id="10551933at2759"/>
<dbReference type="TreeFam" id="TF105291"/>
<dbReference type="Reactome" id="R-BTA-2672351">
    <property type="pathway name" value="Stimuli-sensing channels"/>
</dbReference>
<dbReference type="Reactome" id="R-BTA-5578775">
    <property type="pathway name" value="Ion homeostasis"/>
</dbReference>
<dbReference type="Proteomes" id="UP000009136">
    <property type="component" value="Chromosome 11"/>
</dbReference>
<dbReference type="Bgee" id="ENSBTAG00000003409">
    <property type="expression patterns" value="Expressed in semen and 88 other cell types or tissues"/>
</dbReference>
<dbReference type="GO" id="GO:0034704">
    <property type="term" value="C:calcium channel complex"/>
    <property type="evidence" value="ECO:0000247"/>
    <property type="project" value="AgBase"/>
</dbReference>
<dbReference type="GO" id="GO:0005737">
    <property type="term" value="C:cytoplasm"/>
    <property type="evidence" value="ECO:0000247"/>
    <property type="project" value="AgBase"/>
</dbReference>
<dbReference type="GO" id="GO:0043231">
    <property type="term" value="C:intracellular membrane-bounded organelle"/>
    <property type="evidence" value="ECO:0000247"/>
    <property type="project" value="AgBase"/>
</dbReference>
<dbReference type="GO" id="GO:0016020">
    <property type="term" value="C:membrane"/>
    <property type="evidence" value="ECO:0000247"/>
    <property type="project" value="AgBase"/>
</dbReference>
<dbReference type="GO" id="GO:0016529">
    <property type="term" value="C:sarcoplasmic reticulum"/>
    <property type="evidence" value="ECO:0000247"/>
    <property type="project" value="AgBase"/>
</dbReference>
<dbReference type="GO" id="GO:0033017">
    <property type="term" value="C:sarcoplasmic reticulum membrane"/>
    <property type="evidence" value="ECO:0000247"/>
    <property type="project" value="AgBase"/>
</dbReference>
<dbReference type="GO" id="GO:0030018">
    <property type="term" value="C:Z disc"/>
    <property type="evidence" value="ECO:0000247"/>
    <property type="project" value="AgBase"/>
</dbReference>
<dbReference type="GO" id="GO:0019855">
    <property type="term" value="F:calcium channel inhibitor activity"/>
    <property type="evidence" value="ECO:0000247"/>
    <property type="project" value="AgBase"/>
</dbReference>
<dbReference type="GO" id="GO:0030551">
    <property type="term" value="F:cyclic nucleotide binding"/>
    <property type="evidence" value="ECO:0000247"/>
    <property type="project" value="AgBase"/>
</dbReference>
<dbReference type="GO" id="GO:0005528">
    <property type="term" value="F:FK506 binding"/>
    <property type="evidence" value="ECO:0000247"/>
    <property type="project" value="AgBase"/>
</dbReference>
<dbReference type="GO" id="GO:0003755">
    <property type="term" value="F:peptidyl-prolyl cis-trans isomerase activity"/>
    <property type="evidence" value="ECO:0000247"/>
    <property type="project" value="AgBase"/>
</dbReference>
<dbReference type="GO" id="GO:0005102">
    <property type="term" value="F:signaling receptor binding"/>
    <property type="evidence" value="ECO:0000247"/>
    <property type="project" value="AgBase"/>
</dbReference>
<dbReference type="GO" id="GO:0044325">
    <property type="term" value="F:transmembrane transporter binding"/>
    <property type="evidence" value="ECO:0000247"/>
    <property type="project" value="AgBase"/>
</dbReference>
<dbReference type="GO" id="GO:0030073">
    <property type="term" value="P:insulin secretion"/>
    <property type="evidence" value="ECO:0000247"/>
    <property type="project" value="AgBase"/>
</dbReference>
<dbReference type="GO" id="GO:0010459">
    <property type="term" value="P:negative regulation of heart rate"/>
    <property type="evidence" value="ECO:0000247"/>
    <property type="project" value="AgBase"/>
</dbReference>
<dbReference type="GO" id="GO:0061179">
    <property type="term" value="P:negative regulation of insulin secretion involved in cellular response to glucose stimulus"/>
    <property type="evidence" value="ECO:0000247"/>
    <property type="project" value="AgBase"/>
</dbReference>
<dbReference type="GO" id="GO:0051280">
    <property type="term" value="P:negative regulation of release of sequestered calcium ion into cytosol"/>
    <property type="evidence" value="ECO:0000247"/>
    <property type="project" value="AgBase"/>
</dbReference>
<dbReference type="GO" id="GO:0060315">
    <property type="term" value="P:negative regulation of ryanodine-sensitive calcium-release channel activity"/>
    <property type="evidence" value="ECO:0000247"/>
    <property type="project" value="AgBase"/>
</dbReference>
<dbReference type="GO" id="GO:0019227">
    <property type="term" value="P:neuronal action potential propagation"/>
    <property type="evidence" value="ECO:0000247"/>
    <property type="project" value="AgBase"/>
</dbReference>
<dbReference type="GO" id="GO:0048680">
    <property type="term" value="P:positive regulation of axon regeneration"/>
    <property type="evidence" value="ECO:0000247"/>
    <property type="project" value="AgBase"/>
</dbReference>
<dbReference type="GO" id="GO:0007204">
    <property type="term" value="P:positive regulation of cytosolic calcium ion concentration"/>
    <property type="evidence" value="ECO:0000247"/>
    <property type="project" value="AgBase"/>
</dbReference>
<dbReference type="GO" id="GO:0051284">
    <property type="term" value="P:positive regulation of sequestering of calcium ion"/>
    <property type="evidence" value="ECO:0000247"/>
    <property type="project" value="AgBase"/>
</dbReference>
<dbReference type="GO" id="GO:0000413">
    <property type="term" value="P:protein peptidyl-prolyl isomerization"/>
    <property type="evidence" value="ECO:0000247"/>
    <property type="project" value="AgBase"/>
</dbReference>
<dbReference type="GO" id="GO:0010881">
    <property type="term" value="P:regulation of cardiac muscle contraction by regulation of the release of sequestered calcium ion"/>
    <property type="evidence" value="ECO:0000247"/>
    <property type="project" value="AgBase"/>
</dbReference>
<dbReference type="GO" id="GO:0051480">
    <property type="term" value="P:regulation of cytosolic calcium ion concentration"/>
    <property type="evidence" value="ECO:0000247"/>
    <property type="project" value="AgBase"/>
</dbReference>
<dbReference type="GO" id="GO:0002027">
    <property type="term" value="P:regulation of heart rate"/>
    <property type="evidence" value="ECO:0000247"/>
    <property type="project" value="AgBase"/>
</dbReference>
<dbReference type="GO" id="GO:0010880">
    <property type="term" value="P:regulation of release of sequestered calcium ion into cytosol by sarcoplasmic reticulum"/>
    <property type="evidence" value="ECO:0000247"/>
    <property type="project" value="AgBase"/>
</dbReference>
<dbReference type="GO" id="GO:0060314">
    <property type="term" value="P:regulation of ryanodine-sensitive calcium-release channel activity"/>
    <property type="evidence" value="ECO:0000247"/>
    <property type="project" value="AgBase"/>
</dbReference>
<dbReference type="GO" id="GO:0051209">
    <property type="term" value="P:release of sequestered calcium ion into cytosol"/>
    <property type="evidence" value="ECO:0000247"/>
    <property type="project" value="AgBase"/>
</dbReference>
<dbReference type="GO" id="GO:0014808">
    <property type="term" value="P:release of sequestered calcium ion into cytosol by sarcoplasmic reticulum"/>
    <property type="evidence" value="ECO:0000247"/>
    <property type="project" value="AgBase"/>
</dbReference>
<dbReference type="GO" id="GO:0009749">
    <property type="term" value="P:response to glucose"/>
    <property type="evidence" value="ECO:0000247"/>
    <property type="project" value="AgBase"/>
</dbReference>
<dbReference type="GO" id="GO:0042542">
    <property type="term" value="P:response to hydrogen peroxide"/>
    <property type="evidence" value="ECO:0000247"/>
    <property type="project" value="AgBase"/>
</dbReference>
<dbReference type="GO" id="GO:0051775">
    <property type="term" value="P:response to redox state"/>
    <property type="evidence" value="ECO:0000247"/>
    <property type="project" value="AgBase"/>
</dbReference>
<dbReference type="GO" id="GO:0033197">
    <property type="term" value="P:response to vitamin E"/>
    <property type="evidence" value="ECO:0000247"/>
    <property type="project" value="AgBase"/>
</dbReference>
<dbReference type="GO" id="GO:0006939">
    <property type="term" value="P:smooth muscle contraction"/>
    <property type="evidence" value="ECO:0000247"/>
    <property type="project" value="AgBase"/>
</dbReference>
<dbReference type="GO" id="GO:0042098">
    <property type="term" value="P:T cell proliferation"/>
    <property type="evidence" value="ECO:0000247"/>
    <property type="project" value="AgBase"/>
</dbReference>
<dbReference type="FunFam" id="3.10.50.40:FF:000008">
    <property type="entry name" value="Peptidylprolyl isomerase"/>
    <property type="match status" value="1"/>
</dbReference>
<dbReference type="Gene3D" id="3.10.50.40">
    <property type="match status" value="1"/>
</dbReference>
<dbReference type="InterPro" id="IPR050689">
    <property type="entry name" value="FKBP-type_PPIase"/>
</dbReference>
<dbReference type="InterPro" id="IPR046357">
    <property type="entry name" value="PPIase_dom_sf"/>
</dbReference>
<dbReference type="InterPro" id="IPR001179">
    <property type="entry name" value="PPIase_FKBP_dom"/>
</dbReference>
<dbReference type="PANTHER" id="PTHR10516">
    <property type="entry name" value="PEPTIDYL-PROLYL CIS-TRANS ISOMERASE"/>
    <property type="match status" value="1"/>
</dbReference>
<dbReference type="PANTHER" id="PTHR10516:SF429">
    <property type="entry name" value="PEPTIDYL-PROLYL CIS-TRANS ISOMERASE FKBP1B"/>
    <property type="match status" value="1"/>
</dbReference>
<dbReference type="Pfam" id="PF00254">
    <property type="entry name" value="FKBP_C"/>
    <property type="match status" value="1"/>
</dbReference>
<dbReference type="SUPFAM" id="SSF54534">
    <property type="entry name" value="FKBP-like"/>
    <property type="match status" value="1"/>
</dbReference>
<dbReference type="PROSITE" id="PS50059">
    <property type="entry name" value="FKBP_PPIASE"/>
    <property type="match status" value="1"/>
</dbReference>
<feature type="initiator methionine" description="Removed" evidence="3">
    <location>
        <position position="1"/>
    </location>
</feature>
<feature type="chain" id="PRO_0000075294" description="Peptidyl-prolyl cis-trans isomerase FKBP1B">
    <location>
        <begin position="2"/>
        <end position="108"/>
    </location>
</feature>
<feature type="domain" description="PPIase FKBP-type" evidence="2">
    <location>
        <begin position="20"/>
        <end position="108"/>
    </location>
</feature>